<reference key="1">
    <citation type="journal article" date="2007" name="ISME J.">
        <title>Population level functional diversity in a microbial community revealed by comparative genomic and metagenomic analyses.</title>
        <authorList>
            <person name="Bhaya D."/>
            <person name="Grossman A.R."/>
            <person name="Steunou A.-S."/>
            <person name="Khuri N."/>
            <person name="Cohan F.M."/>
            <person name="Hamamura N."/>
            <person name="Melendrez M.C."/>
            <person name="Bateson M.M."/>
            <person name="Ward D.M."/>
            <person name="Heidelberg J.F."/>
        </authorList>
    </citation>
    <scope>NUCLEOTIDE SEQUENCE [LARGE SCALE GENOMIC DNA]</scope>
    <source>
        <strain>JA-3-3Ab</strain>
    </source>
</reference>
<accession>Q2JS35</accession>
<keyword id="KW-0249">Electron transport</keyword>
<keyword id="KW-0349">Heme</keyword>
<keyword id="KW-0408">Iron</keyword>
<keyword id="KW-0472">Membrane</keyword>
<keyword id="KW-0479">Metal-binding</keyword>
<keyword id="KW-0602">Photosynthesis</keyword>
<keyword id="KW-0604">Photosystem II</keyword>
<keyword id="KW-0793">Thylakoid</keyword>
<keyword id="KW-0812">Transmembrane</keyword>
<keyword id="KW-1133">Transmembrane helix</keyword>
<keyword id="KW-0813">Transport</keyword>
<feature type="chain" id="PRO_0000233656" description="Cytochrome b559 subunit beta">
    <location>
        <begin position="1"/>
        <end position="47"/>
    </location>
</feature>
<feature type="transmembrane region" description="Helical" evidence="1">
    <location>
        <begin position="22"/>
        <end position="38"/>
    </location>
</feature>
<feature type="binding site" description="axial binding residue" evidence="1">
    <location>
        <position position="26"/>
    </location>
    <ligand>
        <name>heme</name>
        <dbReference type="ChEBI" id="CHEBI:30413"/>
        <note>ligand shared with alpha subunit</note>
    </ligand>
    <ligandPart>
        <name>Fe</name>
        <dbReference type="ChEBI" id="CHEBI:18248"/>
    </ligandPart>
</feature>
<name>PSBF_SYNJA</name>
<dbReference type="EMBL" id="CP000239">
    <property type="protein sequence ID" value="ABD00551.1"/>
    <property type="molecule type" value="Genomic_DNA"/>
</dbReference>
<dbReference type="RefSeq" id="WP_011431224.1">
    <property type="nucleotide sequence ID" value="NC_007775.1"/>
</dbReference>
<dbReference type="SMR" id="Q2JS35"/>
<dbReference type="STRING" id="321327.CYA_2429"/>
<dbReference type="KEGG" id="cya:CYA_2429"/>
<dbReference type="eggNOG" id="ENOG50332KX">
    <property type="taxonomic scope" value="Bacteria"/>
</dbReference>
<dbReference type="HOGENOM" id="CLU_211753_1_0_3"/>
<dbReference type="OrthoDB" id="532613at2"/>
<dbReference type="Proteomes" id="UP000008818">
    <property type="component" value="Chromosome"/>
</dbReference>
<dbReference type="GO" id="GO:0009539">
    <property type="term" value="C:photosystem II reaction center"/>
    <property type="evidence" value="ECO:0007669"/>
    <property type="project" value="InterPro"/>
</dbReference>
<dbReference type="GO" id="GO:0031676">
    <property type="term" value="C:plasma membrane-derived thylakoid membrane"/>
    <property type="evidence" value="ECO:0007669"/>
    <property type="project" value="UniProtKB-SubCell"/>
</dbReference>
<dbReference type="GO" id="GO:0009055">
    <property type="term" value="F:electron transfer activity"/>
    <property type="evidence" value="ECO:0007669"/>
    <property type="project" value="UniProtKB-UniRule"/>
</dbReference>
<dbReference type="GO" id="GO:0020037">
    <property type="term" value="F:heme binding"/>
    <property type="evidence" value="ECO:0007669"/>
    <property type="project" value="InterPro"/>
</dbReference>
<dbReference type="GO" id="GO:0005506">
    <property type="term" value="F:iron ion binding"/>
    <property type="evidence" value="ECO:0007669"/>
    <property type="project" value="UniProtKB-UniRule"/>
</dbReference>
<dbReference type="GO" id="GO:0009767">
    <property type="term" value="P:photosynthetic electron transport chain"/>
    <property type="evidence" value="ECO:0007669"/>
    <property type="project" value="InterPro"/>
</dbReference>
<dbReference type="HAMAP" id="MF_00643">
    <property type="entry name" value="PSII_PsbF"/>
    <property type="match status" value="1"/>
</dbReference>
<dbReference type="InterPro" id="IPR006241">
    <property type="entry name" value="PSII_cyt_b559_bsu"/>
</dbReference>
<dbReference type="InterPro" id="IPR006216">
    <property type="entry name" value="PSII_cyt_b559_CS"/>
</dbReference>
<dbReference type="InterPro" id="IPR013081">
    <property type="entry name" value="PSII_cyt_b559_N"/>
</dbReference>
<dbReference type="NCBIfam" id="TIGR01333">
    <property type="entry name" value="cyt_b559_beta"/>
    <property type="match status" value="1"/>
</dbReference>
<dbReference type="Pfam" id="PF00283">
    <property type="entry name" value="Cytochrom_B559"/>
    <property type="match status" value="1"/>
</dbReference>
<dbReference type="PIRSF" id="PIRSF000037">
    <property type="entry name" value="PsbF"/>
    <property type="match status" value="1"/>
</dbReference>
<dbReference type="SUPFAM" id="SSF161045">
    <property type="entry name" value="Cytochrome b559 subunits"/>
    <property type="match status" value="1"/>
</dbReference>
<dbReference type="PROSITE" id="PS00537">
    <property type="entry name" value="CYTOCHROME_B559"/>
    <property type="match status" value="1"/>
</dbReference>
<evidence type="ECO:0000255" key="1">
    <source>
        <dbReference type="HAMAP-Rule" id="MF_00643"/>
    </source>
</evidence>
<gene>
    <name evidence="1" type="primary">psbF</name>
    <name type="ordered locus">CYA_2429</name>
</gene>
<organism>
    <name type="scientific">Synechococcus sp. (strain JA-3-3Ab)</name>
    <name type="common">Cyanobacteria bacterium Yellowstone A-Prime</name>
    <dbReference type="NCBI Taxonomy" id="321327"/>
    <lineage>
        <taxon>Bacteria</taxon>
        <taxon>Bacillati</taxon>
        <taxon>Cyanobacteriota</taxon>
        <taxon>Cyanophyceae</taxon>
        <taxon>Synechococcales</taxon>
        <taxon>Synechococcaceae</taxon>
        <taxon>Synechococcus</taxon>
    </lineage>
</organism>
<protein>
    <recommendedName>
        <fullName evidence="1">Cytochrome b559 subunit beta</fullName>
    </recommendedName>
    <alternativeName>
        <fullName evidence="1">PSII reaction center subunit VI</fullName>
    </alternativeName>
</protein>
<sequence length="47" mass="5323">MATKSVNKPDEPVFYPVFTVRWLAVHTLAIPTVFFLGAIAAMQFIQR</sequence>
<comment type="function">
    <text evidence="1">This b-type cytochrome is tightly associated with the reaction center of photosystem II (PSII). PSII is a light-driven water:plastoquinone oxidoreductase that uses light energy to abstract electrons from H(2)O, generating O(2) and a proton gradient subsequently used for ATP formation. It consists of a core antenna complex that captures photons, and an electron transfer chain that converts photonic excitation into a charge separation.</text>
</comment>
<comment type="cofactor">
    <cofactor evidence="1">
        <name>heme b</name>
        <dbReference type="ChEBI" id="CHEBI:60344"/>
    </cofactor>
    <text evidence="1">With its partner (PsbE) binds heme. PSII binds additional chlorophylls, carotenoids and specific lipids.</text>
</comment>
<comment type="subunit">
    <text evidence="1">Heterodimer of an alpha subunit and a beta subunit. PSII is composed of 1 copy each of membrane proteins PsbA, PsbB, PsbC, PsbD, PsbE, PsbF, PsbH, PsbI, PsbJ, PsbK, PsbL, PsbM, PsbT, PsbX, PsbY, PsbZ, Psb30/Ycf12, peripheral proteins PsbO, CyanoQ (PsbQ), PsbU, PsbV and a large number of cofactors. It forms dimeric complexes.</text>
</comment>
<comment type="subcellular location">
    <subcellularLocation>
        <location evidence="1">Cellular thylakoid membrane</location>
        <topology evidence="1">Single-pass membrane protein</topology>
    </subcellularLocation>
</comment>
<comment type="similarity">
    <text evidence="1">Belongs to the PsbE/PsbF family.</text>
</comment>
<proteinExistence type="inferred from homology"/>